<dbReference type="EMBL" id="AP006628">
    <property type="protein sequence ID" value="BAD04555.1"/>
    <property type="molecule type" value="Genomic_DNA"/>
</dbReference>
<dbReference type="SMR" id="Q6YQA5"/>
<dbReference type="STRING" id="262768.PAM_470"/>
<dbReference type="KEGG" id="poy:PAM_470"/>
<dbReference type="eggNOG" id="COG0335">
    <property type="taxonomic scope" value="Bacteria"/>
</dbReference>
<dbReference type="HOGENOM" id="CLU_103507_2_2_14"/>
<dbReference type="BioCyc" id="OYEL262768:G1G26-555-MONOMER"/>
<dbReference type="Proteomes" id="UP000002523">
    <property type="component" value="Chromosome"/>
</dbReference>
<dbReference type="GO" id="GO:0022625">
    <property type="term" value="C:cytosolic large ribosomal subunit"/>
    <property type="evidence" value="ECO:0007669"/>
    <property type="project" value="TreeGrafter"/>
</dbReference>
<dbReference type="GO" id="GO:0003735">
    <property type="term" value="F:structural constituent of ribosome"/>
    <property type="evidence" value="ECO:0007669"/>
    <property type="project" value="InterPro"/>
</dbReference>
<dbReference type="GO" id="GO:0006412">
    <property type="term" value="P:translation"/>
    <property type="evidence" value="ECO:0007669"/>
    <property type="project" value="UniProtKB-UniRule"/>
</dbReference>
<dbReference type="Gene3D" id="2.30.30.790">
    <property type="match status" value="1"/>
</dbReference>
<dbReference type="HAMAP" id="MF_00402">
    <property type="entry name" value="Ribosomal_bL19"/>
    <property type="match status" value="1"/>
</dbReference>
<dbReference type="InterPro" id="IPR001857">
    <property type="entry name" value="Ribosomal_bL19"/>
</dbReference>
<dbReference type="InterPro" id="IPR038657">
    <property type="entry name" value="Ribosomal_bL19_sf"/>
</dbReference>
<dbReference type="InterPro" id="IPR008991">
    <property type="entry name" value="Translation_prot_SH3-like_sf"/>
</dbReference>
<dbReference type="NCBIfam" id="TIGR01024">
    <property type="entry name" value="rplS_bact"/>
    <property type="match status" value="1"/>
</dbReference>
<dbReference type="PANTHER" id="PTHR15680:SF9">
    <property type="entry name" value="LARGE RIBOSOMAL SUBUNIT PROTEIN BL19M"/>
    <property type="match status" value="1"/>
</dbReference>
<dbReference type="PANTHER" id="PTHR15680">
    <property type="entry name" value="RIBOSOMAL PROTEIN L19"/>
    <property type="match status" value="1"/>
</dbReference>
<dbReference type="Pfam" id="PF01245">
    <property type="entry name" value="Ribosomal_L19"/>
    <property type="match status" value="1"/>
</dbReference>
<dbReference type="PIRSF" id="PIRSF002191">
    <property type="entry name" value="Ribosomal_L19"/>
    <property type="match status" value="1"/>
</dbReference>
<dbReference type="PRINTS" id="PR00061">
    <property type="entry name" value="RIBOSOMALL19"/>
</dbReference>
<dbReference type="SUPFAM" id="SSF50104">
    <property type="entry name" value="Translation proteins SH3-like domain"/>
    <property type="match status" value="1"/>
</dbReference>
<feature type="chain" id="PRO_0000163500" description="Large ribosomal subunit protein bL19">
    <location>
        <begin position="1"/>
        <end position="118"/>
    </location>
</feature>
<comment type="function">
    <text evidence="1">This protein is located at the 30S-50S ribosomal subunit interface and may play a role in the structure and function of the aminoacyl-tRNA binding site.</text>
</comment>
<comment type="similarity">
    <text evidence="1">Belongs to the bacterial ribosomal protein bL19 family.</text>
</comment>
<organism>
    <name type="scientific">Onion yellows phytoplasma (strain OY-M)</name>
    <dbReference type="NCBI Taxonomy" id="262768"/>
    <lineage>
        <taxon>Bacteria</taxon>
        <taxon>Bacillati</taxon>
        <taxon>Mycoplasmatota</taxon>
        <taxon>Mollicutes</taxon>
        <taxon>Acholeplasmatales</taxon>
        <taxon>Acholeplasmataceae</taxon>
        <taxon>Candidatus Phytoplasma</taxon>
        <taxon>16SrI (Aster yellows group)</taxon>
    </lineage>
</organism>
<evidence type="ECO:0000255" key="1">
    <source>
        <dbReference type="HAMAP-Rule" id="MF_00402"/>
    </source>
</evidence>
<evidence type="ECO:0000305" key="2"/>
<accession>Q6YQA5</accession>
<proteinExistence type="inferred from homology"/>
<sequence>MSQLKGQNLIESVNQHQLKDVPFFKPGDTVKVFIKIDEGNRKRVQIFEGLVIKRQGRLVTETFTVRKIFAGVGIELTFPVHSPTNEKIEVVRRGIVRRAKLHYVRNLSSKASRIKEQR</sequence>
<protein>
    <recommendedName>
        <fullName evidence="1">Large ribosomal subunit protein bL19</fullName>
    </recommendedName>
    <alternativeName>
        <fullName evidence="2">50S ribosomal protein L19</fullName>
    </alternativeName>
</protein>
<reference key="1">
    <citation type="journal article" date="2004" name="Nat. Genet.">
        <title>Reductive evolution suggested from the complete genome sequence of a plant-pathogenic phytoplasma.</title>
        <authorList>
            <person name="Oshima K."/>
            <person name="Kakizawa S."/>
            <person name="Nishigawa H."/>
            <person name="Jung H.-Y."/>
            <person name="Wei W."/>
            <person name="Suzuki S."/>
            <person name="Arashida R."/>
            <person name="Nakata D."/>
            <person name="Miyata S."/>
            <person name="Ugaki M."/>
            <person name="Namba S."/>
        </authorList>
    </citation>
    <scope>NUCLEOTIDE SEQUENCE [LARGE SCALE GENOMIC DNA]</scope>
    <source>
        <strain>OY-M</strain>
    </source>
</reference>
<keyword id="KW-0687">Ribonucleoprotein</keyword>
<keyword id="KW-0689">Ribosomal protein</keyword>
<gene>
    <name evidence="1" type="primary">rplS</name>
    <name type="ordered locus">PAM_470</name>
</gene>
<name>RL19_ONYPE</name>